<sequence length="315" mass="36206">MQESLNSNDFKEYAAKKAKHITSAKNIAPLLECIASLPTIPSHFYSDNGIHIVAQDKTLAQKYHKAIYTLATQLKPWRKGPFFLFDIHIDSEWQSFMKWQLLAPHCNLEGKYIADVGCNNGYYMFEMLLQGKKLYKKIIGFDPSGIFKCQFDFINHFINAPIEFELLGVEDLLAYSQAHNQSFDVIFCLGVLYHRFDPINTLKILSQSLNKGGELILDTLIYESNEEICLCPAQSYAKMSNVYFIPSIPTLKGWCERANLYDFEVINLTPTTTQEQRQSAWVDSQSLSAFLNETQTRTIEGYQAPLRGYFKLKKR</sequence>
<keyword id="KW-1185">Reference proteome</keyword>
<keyword id="KW-0808">Transferase</keyword>
<keyword id="KW-0819">tRNA processing</keyword>
<reference key="1">
    <citation type="journal article" date="2003" name="Proc. Natl. Acad. Sci. U.S.A.">
        <title>The complete genome sequence of the carcinogenic bacterium Helicobacter hepaticus.</title>
        <authorList>
            <person name="Suerbaum S."/>
            <person name="Josenhans C."/>
            <person name="Sterzenbach T."/>
            <person name="Drescher B."/>
            <person name="Brandt P."/>
            <person name="Bell M."/>
            <person name="Droege M."/>
            <person name="Fartmann B."/>
            <person name="Fischer H.-P."/>
            <person name="Ge Z."/>
            <person name="Hoerster A."/>
            <person name="Holland R."/>
            <person name="Klein K."/>
            <person name="Koenig J."/>
            <person name="Macko L."/>
            <person name="Mendz G.L."/>
            <person name="Nyakatura G."/>
            <person name="Schauer D.B."/>
            <person name="Shen Z."/>
            <person name="Weber J."/>
            <person name="Frosch M."/>
            <person name="Fox J.G."/>
        </authorList>
    </citation>
    <scope>NUCLEOTIDE SEQUENCE [LARGE SCALE GENOMIC DNA]</scope>
    <source>
        <strain>ATCC 51449 / 3B1</strain>
    </source>
</reference>
<comment type="function">
    <text evidence="1">Catalyzes carboxymethyl transfer from carboxy-S-adenosyl-L-methionine (Cx-SAM) to 5-hydroxyuridine (ho5U) to form 5-carboxymethoxyuridine (cmo5U) at position 34 in tRNAs.</text>
</comment>
<comment type="catalytic activity">
    <reaction evidence="1">
        <text>carboxy-S-adenosyl-L-methionine + 5-hydroxyuridine(34) in tRNA = 5-carboxymethoxyuridine(34) in tRNA + S-adenosyl-L-homocysteine + H(+)</text>
        <dbReference type="Rhea" id="RHEA:52848"/>
        <dbReference type="Rhea" id="RHEA-COMP:13381"/>
        <dbReference type="Rhea" id="RHEA-COMP:13383"/>
        <dbReference type="ChEBI" id="CHEBI:15378"/>
        <dbReference type="ChEBI" id="CHEBI:57856"/>
        <dbReference type="ChEBI" id="CHEBI:134278"/>
        <dbReference type="ChEBI" id="CHEBI:136877"/>
        <dbReference type="ChEBI" id="CHEBI:136879"/>
    </reaction>
</comment>
<comment type="subunit">
    <text evidence="1">Homotetramer.</text>
</comment>
<comment type="similarity">
    <text evidence="1">Belongs to the class I-like SAM-binding methyltransferase superfamily. CmoB family.</text>
</comment>
<accession>Q7VGI1</accession>
<gene>
    <name evidence="1" type="primary">cmoB</name>
    <name type="ordered locus">HH_1340</name>
</gene>
<evidence type="ECO:0000255" key="1">
    <source>
        <dbReference type="HAMAP-Rule" id="MF_01590"/>
    </source>
</evidence>
<organism>
    <name type="scientific">Helicobacter hepaticus (strain ATCC 51449 / 3B1)</name>
    <dbReference type="NCBI Taxonomy" id="235279"/>
    <lineage>
        <taxon>Bacteria</taxon>
        <taxon>Pseudomonadati</taxon>
        <taxon>Campylobacterota</taxon>
        <taxon>Epsilonproteobacteria</taxon>
        <taxon>Campylobacterales</taxon>
        <taxon>Helicobacteraceae</taxon>
        <taxon>Helicobacter</taxon>
    </lineage>
</organism>
<name>CMOB_HELHP</name>
<proteinExistence type="inferred from homology"/>
<feature type="chain" id="PRO_0000313928" description="tRNA U34 carboxymethyltransferase">
    <location>
        <begin position="1"/>
        <end position="315"/>
    </location>
</feature>
<feature type="binding site" evidence="1">
    <location>
        <position position="79"/>
    </location>
    <ligand>
        <name>carboxy-S-adenosyl-L-methionine</name>
        <dbReference type="ChEBI" id="CHEBI:134278"/>
    </ligand>
</feature>
<feature type="binding site" evidence="1">
    <location>
        <position position="93"/>
    </location>
    <ligand>
        <name>carboxy-S-adenosyl-L-methionine</name>
        <dbReference type="ChEBI" id="CHEBI:134278"/>
    </ligand>
</feature>
<feature type="binding site" evidence="1">
    <location>
        <position position="98"/>
    </location>
    <ligand>
        <name>carboxy-S-adenosyl-L-methionine</name>
        <dbReference type="ChEBI" id="CHEBI:134278"/>
    </ligand>
</feature>
<feature type="binding site" evidence="1">
    <location>
        <position position="117"/>
    </location>
    <ligand>
        <name>carboxy-S-adenosyl-L-methionine</name>
        <dbReference type="ChEBI" id="CHEBI:134278"/>
    </ligand>
</feature>
<feature type="binding site" evidence="1">
    <location>
        <begin position="142"/>
        <end position="144"/>
    </location>
    <ligand>
        <name>carboxy-S-adenosyl-L-methionine</name>
        <dbReference type="ChEBI" id="CHEBI:134278"/>
    </ligand>
</feature>
<feature type="binding site" evidence="1">
    <location>
        <begin position="169"/>
        <end position="170"/>
    </location>
    <ligand>
        <name>carboxy-S-adenosyl-L-methionine</name>
        <dbReference type="ChEBI" id="CHEBI:134278"/>
    </ligand>
</feature>
<feature type="binding site" evidence="1">
    <location>
        <position position="193"/>
    </location>
    <ligand>
        <name>carboxy-S-adenosyl-L-methionine</name>
        <dbReference type="ChEBI" id="CHEBI:134278"/>
    </ligand>
</feature>
<feature type="binding site" evidence="1">
    <location>
        <position position="307"/>
    </location>
    <ligand>
        <name>carboxy-S-adenosyl-L-methionine</name>
        <dbReference type="ChEBI" id="CHEBI:134278"/>
    </ligand>
</feature>
<protein>
    <recommendedName>
        <fullName evidence="1">tRNA U34 carboxymethyltransferase</fullName>
        <ecNumber evidence="1">2.5.1.-</ecNumber>
    </recommendedName>
</protein>
<dbReference type="EC" id="2.5.1.-" evidence="1"/>
<dbReference type="EMBL" id="AE017125">
    <property type="protein sequence ID" value="AAP77937.1"/>
    <property type="molecule type" value="Genomic_DNA"/>
</dbReference>
<dbReference type="RefSeq" id="WP_011116180.1">
    <property type="nucleotide sequence ID" value="NC_004917.1"/>
</dbReference>
<dbReference type="SMR" id="Q7VGI1"/>
<dbReference type="STRING" id="235279.HH_1340"/>
<dbReference type="KEGG" id="hhe:HH_1340"/>
<dbReference type="eggNOG" id="COG2227">
    <property type="taxonomic scope" value="Bacteria"/>
</dbReference>
<dbReference type="HOGENOM" id="CLU_052665_1_0_7"/>
<dbReference type="OrthoDB" id="9765084at2"/>
<dbReference type="Proteomes" id="UP000002495">
    <property type="component" value="Chromosome"/>
</dbReference>
<dbReference type="GO" id="GO:0016765">
    <property type="term" value="F:transferase activity, transferring alkyl or aryl (other than methyl) groups"/>
    <property type="evidence" value="ECO:0007669"/>
    <property type="project" value="InterPro"/>
</dbReference>
<dbReference type="GO" id="GO:0002098">
    <property type="term" value="P:tRNA wobble uridine modification"/>
    <property type="evidence" value="ECO:0007669"/>
    <property type="project" value="InterPro"/>
</dbReference>
<dbReference type="CDD" id="cd02440">
    <property type="entry name" value="AdoMet_MTases"/>
    <property type="match status" value="1"/>
</dbReference>
<dbReference type="Gene3D" id="3.40.50.150">
    <property type="entry name" value="Vaccinia Virus protein VP39"/>
    <property type="match status" value="1"/>
</dbReference>
<dbReference type="HAMAP" id="MF_01590">
    <property type="entry name" value="tRNA_carboxymethyltr_CmoB"/>
    <property type="match status" value="1"/>
</dbReference>
<dbReference type="InterPro" id="IPR010017">
    <property type="entry name" value="CmoB"/>
</dbReference>
<dbReference type="InterPro" id="IPR027555">
    <property type="entry name" value="Mo5U34_MeTrfas-like"/>
</dbReference>
<dbReference type="InterPro" id="IPR029063">
    <property type="entry name" value="SAM-dependent_MTases_sf"/>
</dbReference>
<dbReference type="NCBIfam" id="NF011650">
    <property type="entry name" value="PRK15068.1"/>
    <property type="match status" value="1"/>
</dbReference>
<dbReference type="NCBIfam" id="TIGR00452">
    <property type="entry name" value="tRNA 5-methoxyuridine(34)/uridine 5-oxyacetic acid(34) synthase CmoB"/>
    <property type="match status" value="1"/>
</dbReference>
<dbReference type="Pfam" id="PF08003">
    <property type="entry name" value="Methyltransf_9"/>
    <property type="match status" value="1"/>
</dbReference>
<dbReference type="SUPFAM" id="SSF53335">
    <property type="entry name" value="S-adenosyl-L-methionine-dependent methyltransferases"/>
    <property type="match status" value="1"/>
</dbReference>